<accession>Q6HEZ1</accession>
<organism>
    <name type="scientific">Bacillus thuringiensis subsp. konkukian (strain 97-27)</name>
    <dbReference type="NCBI Taxonomy" id="281309"/>
    <lineage>
        <taxon>Bacteria</taxon>
        <taxon>Bacillati</taxon>
        <taxon>Bacillota</taxon>
        <taxon>Bacilli</taxon>
        <taxon>Bacillales</taxon>
        <taxon>Bacillaceae</taxon>
        <taxon>Bacillus</taxon>
        <taxon>Bacillus cereus group</taxon>
    </lineage>
</organism>
<sequence>MGQQVLKSSNEKMEKAVAAYSRELATVRAGRASASVLDKVQVDYYGAPTPVVQLANITVPEARLLVIQPYDKTSIGDIEKAILKADLGLNPSNDGTVIRIAFPALTEERRRDLVKVVKKYAEEAKVAVRNVRRDGNDDLKKLEKAGEITEDDLRGYTEDIQKETDKYIAKVDEIAKNKEKEIMEV</sequence>
<proteinExistence type="inferred from homology"/>
<reference key="1">
    <citation type="journal article" date="2006" name="J. Bacteriol.">
        <title>Pathogenomic sequence analysis of Bacillus cereus and Bacillus thuringiensis isolates closely related to Bacillus anthracis.</title>
        <authorList>
            <person name="Han C.S."/>
            <person name="Xie G."/>
            <person name="Challacombe J.F."/>
            <person name="Altherr M.R."/>
            <person name="Bhotika S.S."/>
            <person name="Bruce D."/>
            <person name="Campbell C.S."/>
            <person name="Campbell M.L."/>
            <person name="Chen J."/>
            <person name="Chertkov O."/>
            <person name="Cleland C."/>
            <person name="Dimitrijevic M."/>
            <person name="Doggett N.A."/>
            <person name="Fawcett J.J."/>
            <person name="Glavina T."/>
            <person name="Goodwin L.A."/>
            <person name="Hill K.K."/>
            <person name="Hitchcock P."/>
            <person name="Jackson P.J."/>
            <person name="Keim P."/>
            <person name="Kewalramani A.R."/>
            <person name="Longmire J."/>
            <person name="Lucas S."/>
            <person name="Malfatti S."/>
            <person name="McMurry K."/>
            <person name="Meincke L.J."/>
            <person name="Misra M."/>
            <person name="Moseman B.L."/>
            <person name="Mundt M."/>
            <person name="Munk A.C."/>
            <person name="Okinaka R.T."/>
            <person name="Parson-Quintana B."/>
            <person name="Reilly L.P."/>
            <person name="Richardson P."/>
            <person name="Robinson D.L."/>
            <person name="Rubin E."/>
            <person name="Saunders E."/>
            <person name="Tapia R."/>
            <person name="Tesmer J.G."/>
            <person name="Thayer N."/>
            <person name="Thompson L.S."/>
            <person name="Tice H."/>
            <person name="Ticknor L.O."/>
            <person name="Wills P.L."/>
            <person name="Brettin T.S."/>
            <person name="Gilna P."/>
        </authorList>
    </citation>
    <scope>NUCLEOTIDE SEQUENCE [LARGE SCALE GENOMIC DNA]</scope>
    <source>
        <strain>97-27</strain>
    </source>
</reference>
<protein>
    <recommendedName>
        <fullName evidence="1">Ribosome-recycling factor</fullName>
        <shortName evidence="1">RRF</shortName>
    </recommendedName>
    <alternativeName>
        <fullName evidence="1">Ribosome-releasing factor</fullName>
    </alternativeName>
</protein>
<name>RRF_BACHK</name>
<evidence type="ECO:0000255" key="1">
    <source>
        <dbReference type="HAMAP-Rule" id="MF_00040"/>
    </source>
</evidence>
<dbReference type="EMBL" id="AE017355">
    <property type="protein sequence ID" value="AAT60599.1"/>
    <property type="molecule type" value="Genomic_DNA"/>
</dbReference>
<dbReference type="RefSeq" id="WP_000531503.1">
    <property type="nucleotide sequence ID" value="NC_005957.1"/>
</dbReference>
<dbReference type="RefSeq" id="YP_037885.1">
    <property type="nucleotide sequence ID" value="NC_005957.1"/>
</dbReference>
<dbReference type="SMR" id="Q6HEZ1"/>
<dbReference type="KEGG" id="btk:BT9727_3565"/>
<dbReference type="PATRIC" id="fig|281309.8.peg.3803"/>
<dbReference type="HOGENOM" id="CLU_073981_2_0_9"/>
<dbReference type="Proteomes" id="UP000001301">
    <property type="component" value="Chromosome"/>
</dbReference>
<dbReference type="GO" id="GO:0005737">
    <property type="term" value="C:cytoplasm"/>
    <property type="evidence" value="ECO:0007669"/>
    <property type="project" value="UniProtKB-SubCell"/>
</dbReference>
<dbReference type="GO" id="GO:0043023">
    <property type="term" value="F:ribosomal large subunit binding"/>
    <property type="evidence" value="ECO:0007669"/>
    <property type="project" value="TreeGrafter"/>
</dbReference>
<dbReference type="GO" id="GO:0006415">
    <property type="term" value="P:translational termination"/>
    <property type="evidence" value="ECO:0007669"/>
    <property type="project" value="UniProtKB-UniRule"/>
</dbReference>
<dbReference type="CDD" id="cd00520">
    <property type="entry name" value="RRF"/>
    <property type="match status" value="1"/>
</dbReference>
<dbReference type="FunFam" id="1.10.132.20:FF:000001">
    <property type="entry name" value="Ribosome-recycling factor"/>
    <property type="match status" value="1"/>
</dbReference>
<dbReference type="FunFam" id="3.30.1360.40:FF:000001">
    <property type="entry name" value="Ribosome-recycling factor"/>
    <property type="match status" value="1"/>
</dbReference>
<dbReference type="Gene3D" id="3.30.1360.40">
    <property type="match status" value="1"/>
</dbReference>
<dbReference type="Gene3D" id="1.10.132.20">
    <property type="entry name" value="Ribosome-recycling factor"/>
    <property type="match status" value="1"/>
</dbReference>
<dbReference type="HAMAP" id="MF_00040">
    <property type="entry name" value="RRF"/>
    <property type="match status" value="1"/>
</dbReference>
<dbReference type="InterPro" id="IPR002661">
    <property type="entry name" value="Ribosome_recyc_fac"/>
</dbReference>
<dbReference type="InterPro" id="IPR023584">
    <property type="entry name" value="Ribosome_recyc_fac_dom"/>
</dbReference>
<dbReference type="InterPro" id="IPR036191">
    <property type="entry name" value="RRF_sf"/>
</dbReference>
<dbReference type="NCBIfam" id="TIGR00496">
    <property type="entry name" value="frr"/>
    <property type="match status" value="1"/>
</dbReference>
<dbReference type="PANTHER" id="PTHR20982:SF3">
    <property type="entry name" value="MITOCHONDRIAL RIBOSOME RECYCLING FACTOR PSEUDO 1"/>
    <property type="match status" value="1"/>
</dbReference>
<dbReference type="PANTHER" id="PTHR20982">
    <property type="entry name" value="RIBOSOME RECYCLING FACTOR"/>
    <property type="match status" value="1"/>
</dbReference>
<dbReference type="Pfam" id="PF01765">
    <property type="entry name" value="RRF"/>
    <property type="match status" value="1"/>
</dbReference>
<dbReference type="SUPFAM" id="SSF55194">
    <property type="entry name" value="Ribosome recycling factor, RRF"/>
    <property type="match status" value="1"/>
</dbReference>
<comment type="function">
    <text evidence="1">Responsible for the release of ribosomes from messenger RNA at the termination of protein biosynthesis. May increase the efficiency of translation by recycling ribosomes from one round of translation to another.</text>
</comment>
<comment type="subcellular location">
    <subcellularLocation>
        <location evidence="1">Cytoplasm</location>
    </subcellularLocation>
</comment>
<comment type="similarity">
    <text evidence="1">Belongs to the RRF family.</text>
</comment>
<feature type="chain" id="PRO_0000167409" description="Ribosome-recycling factor">
    <location>
        <begin position="1"/>
        <end position="185"/>
    </location>
</feature>
<gene>
    <name evidence="1" type="primary">frr</name>
    <name type="ordered locus">BT9727_3565</name>
</gene>
<keyword id="KW-0963">Cytoplasm</keyword>
<keyword id="KW-0648">Protein biosynthesis</keyword>